<proteinExistence type="inferred from homology"/>
<gene>
    <name evidence="1" type="primary">ppnP</name>
    <name type="ordered locus">VSAL_II0656</name>
</gene>
<keyword id="KW-0328">Glycosyltransferase</keyword>
<keyword id="KW-0808">Transferase</keyword>
<feature type="chain" id="PRO_1000198647" description="Pyrimidine/purine nucleoside phosphorylase">
    <location>
        <begin position="1"/>
        <end position="93"/>
    </location>
</feature>
<reference key="1">
    <citation type="journal article" date="2008" name="BMC Genomics">
        <title>The genome sequence of the fish pathogen Aliivibrio salmonicida strain LFI1238 shows extensive evidence of gene decay.</title>
        <authorList>
            <person name="Hjerde E."/>
            <person name="Lorentzen M.S."/>
            <person name="Holden M.T."/>
            <person name="Seeger K."/>
            <person name="Paulsen S."/>
            <person name="Bason N."/>
            <person name="Churcher C."/>
            <person name="Harris D."/>
            <person name="Norbertczak H."/>
            <person name="Quail M.A."/>
            <person name="Sanders S."/>
            <person name="Thurston S."/>
            <person name="Parkhill J."/>
            <person name="Willassen N.P."/>
            <person name="Thomson N.R."/>
        </authorList>
    </citation>
    <scope>NUCLEOTIDE SEQUENCE [LARGE SCALE GENOMIC DNA]</scope>
    <source>
        <strain>LFI1238</strain>
    </source>
</reference>
<protein>
    <recommendedName>
        <fullName evidence="1">Pyrimidine/purine nucleoside phosphorylase</fullName>
        <ecNumber evidence="1">2.4.2.1</ecNumber>
        <ecNumber evidence="1">2.4.2.2</ecNumber>
    </recommendedName>
    <alternativeName>
        <fullName evidence="1">Adenosine phosphorylase</fullName>
    </alternativeName>
    <alternativeName>
        <fullName evidence="1">Cytidine phosphorylase</fullName>
    </alternativeName>
    <alternativeName>
        <fullName evidence="1">Guanosine phosphorylase</fullName>
    </alternativeName>
    <alternativeName>
        <fullName evidence="1">Inosine phosphorylase</fullName>
    </alternativeName>
    <alternativeName>
        <fullName evidence="1">Thymidine phosphorylase</fullName>
    </alternativeName>
    <alternativeName>
        <fullName evidence="1">Uridine phosphorylase</fullName>
    </alternativeName>
    <alternativeName>
        <fullName evidence="1">Xanthosine phosphorylase</fullName>
    </alternativeName>
</protein>
<organism>
    <name type="scientific">Aliivibrio salmonicida (strain LFI1238)</name>
    <name type="common">Vibrio salmonicida (strain LFI1238)</name>
    <dbReference type="NCBI Taxonomy" id="316275"/>
    <lineage>
        <taxon>Bacteria</taxon>
        <taxon>Pseudomonadati</taxon>
        <taxon>Pseudomonadota</taxon>
        <taxon>Gammaproteobacteria</taxon>
        <taxon>Vibrionales</taxon>
        <taxon>Vibrionaceae</taxon>
        <taxon>Aliivibrio</taxon>
    </lineage>
</organism>
<dbReference type="EC" id="2.4.2.1" evidence="1"/>
<dbReference type="EC" id="2.4.2.2" evidence="1"/>
<dbReference type="EMBL" id="FM178380">
    <property type="protein sequence ID" value="CAQ81410.1"/>
    <property type="molecule type" value="Genomic_DNA"/>
</dbReference>
<dbReference type="RefSeq" id="WP_012551967.1">
    <property type="nucleotide sequence ID" value="NC_011313.1"/>
</dbReference>
<dbReference type="SMR" id="B6ERS6"/>
<dbReference type="KEGG" id="vsa:VSAL_II0656"/>
<dbReference type="eggNOG" id="COG3123">
    <property type="taxonomic scope" value="Bacteria"/>
</dbReference>
<dbReference type="HOGENOM" id="CLU_157874_0_0_6"/>
<dbReference type="Proteomes" id="UP000001730">
    <property type="component" value="Chromosome 2"/>
</dbReference>
<dbReference type="GO" id="GO:0005829">
    <property type="term" value="C:cytosol"/>
    <property type="evidence" value="ECO:0007669"/>
    <property type="project" value="TreeGrafter"/>
</dbReference>
<dbReference type="GO" id="GO:0047975">
    <property type="term" value="F:guanosine phosphorylase activity"/>
    <property type="evidence" value="ECO:0007669"/>
    <property type="project" value="UniProtKB-EC"/>
</dbReference>
<dbReference type="GO" id="GO:0004731">
    <property type="term" value="F:purine-nucleoside phosphorylase activity"/>
    <property type="evidence" value="ECO:0007669"/>
    <property type="project" value="UniProtKB-UniRule"/>
</dbReference>
<dbReference type="GO" id="GO:0009032">
    <property type="term" value="F:thymidine phosphorylase activity"/>
    <property type="evidence" value="ECO:0007669"/>
    <property type="project" value="UniProtKB-EC"/>
</dbReference>
<dbReference type="GO" id="GO:0004850">
    <property type="term" value="F:uridine phosphorylase activity"/>
    <property type="evidence" value="ECO:0007669"/>
    <property type="project" value="UniProtKB-EC"/>
</dbReference>
<dbReference type="Gene3D" id="2.60.120.10">
    <property type="entry name" value="Jelly Rolls"/>
    <property type="match status" value="1"/>
</dbReference>
<dbReference type="HAMAP" id="MF_01537">
    <property type="entry name" value="Nucleos_phosphorylase_PpnP"/>
    <property type="match status" value="1"/>
</dbReference>
<dbReference type="InterPro" id="IPR009664">
    <property type="entry name" value="Ppnp"/>
</dbReference>
<dbReference type="InterPro" id="IPR014710">
    <property type="entry name" value="RmlC-like_jellyroll"/>
</dbReference>
<dbReference type="InterPro" id="IPR011051">
    <property type="entry name" value="RmlC_Cupin_sf"/>
</dbReference>
<dbReference type="PANTHER" id="PTHR36540">
    <property type="entry name" value="PYRIMIDINE/PURINE NUCLEOSIDE PHOSPHORYLASE"/>
    <property type="match status" value="1"/>
</dbReference>
<dbReference type="PANTHER" id="PTHR36540:SF1">
    <property type="entry name" value="PYRIMIDINE_PURINE NUCLEOSIDE PHOSPHORYLASE"/>
    <property type="match status" value="1"/>
</dbReference>
<dbReference type="Pfam" id="PF06865">
    <property type="entry name" value="Ppnp"/>
    <property type="match status" value="1"/>
</dbReference>
<dbReference type="SUPFAM" id="SSF51182">
    <property type="entry name" value="RmlC-like cupins"/>
    <property type="match status" value="1"/>
</dbReference>
<accession>B6ERS6</accession>
<name>PPNP_ALISL</name>
<comment type="function">
    <text evidence="1">Catalyzes the phosphorolysis of diverse nucleosides, yielding D-ribose 1-phosphate and the respective free bases. Can use uridine, adenosine, guanosine, cytidine, thymidine, inosine and xanthosine as substrates. Also catalyzes the reverse reactions.</text>
</comment>
<comment type="catalytic activity">
    <reaction evidence="1">
        <text>a purine D-ribonucleoside + phosphate = a purine nucleobase + alpha-D-ribose 1-phosphate</text>
        <dbReference type="Rhea" id="RHEA:19805"/>
        <dbReference type="ChEBI" id="CHEBI:26386"/>
        <dbReference type="ChEBI" id="CHEBI:43474"/>
        <dbReference type="ChEBI" id="CHEBI:57720"/>
        <dbReference type="ChEBI" id="CHEBI:142355"/>
        <dbReference type="EC" id="2.4.2.1"/>
    </reaction>
</comment>
<comment type="catalytic activity">
    <reaction evidence="1">
        <text>adenosine + phosphate = alpha-D-ribose 1-phosphate + adenine</text>
        <dbReference type="Rhea" id="RHEA:27642"/>
        <dbReference type="ChEBI" id="CHEBI:16335"/>
        <dbReference type="ChEBI" id="CHEBI:16708"/>
        <dbReference type="ChEBI" id="CHEBI:43474"/>
        <dbReference type="ChEBI" id="CHEBI:57720"/>
        <dbReference type="EC" id="2.4.2.1"/>
    </reaction>
</comment>
<comment type="catalytic activity">
    <reaction evidence="1">
        <text>cytidine + phosphate = cytosine + alpha-D-ribose 1-phosphate</text>
        <dbReference type="Rhea" id="RHEA:52540"/>
        <dbReference type="ChEBI" id="CHEBI:16040"/>
        <dbReference type="ChEBI" id="CHEBI:17562"/>
        <dbReference type="ChEBI" id="CHEBI:43474"/>
        <dbReference type="ChEBI" id="CHEBI:57720"/>
        <dbReference type="EC" id="2.4.2.2"/>
    </reaction>
</comment>
<comment type="catalytic activity">
    <reaction evidence="1">
        <text>guanosine + phosphate = alpha-D-ribose 1-phosphate + guanine</text>
        <dbReference type="Rhea" id="RHEA:13233"/>
        <dbReference type="ChEBI" id="CHEBI:16235"/>
        <dbReference type="ChEBI" id="CHEBI:16750"/>
        <dbReference type="ChEBI" id="CHEBI:43474"/>
        <dbReference type="ChEBI" id="CHEBI:57720"/>
        <dbReference type="EC" id="2.4.2.1"/>
    </reaction>
</comment>
<comment type="catalytic activity">
    <reaction evidence="1">
        <text>inosine + phosphate = alpha-D-ribose 1-phosphate + hypoxanthine</text>
        <dbReference type="Rhea" id="RHEA:27646"/>
        <dbReference type="ChEBI" id="CHEBI:17368"/>
        <dbReference type="ChEBI" id="CHEBI:17596"/>
        <dbReference type="ChEBI" id="CHEBI:43474"/>
        <dbReference type="ChEBI" id="CHEBI:57720"/>
        <dbReference type="EC" id="2.4.2.1"/>
    </reaction>
</comment>
<comment type="catalytic activity">
    <reaction evidence="1">
        <text>thymidine + phosphate = 2-deoxy-alpha-D-ribose 1-phosphate + thymine</text>
        <dbReference type="Rhea" id="RHEA:16037"/>
        <dbReference type="ChEBI" id="CHEBI:17748"/>
        <dbReference type="ChEBI" id="CHEBI:17821"/>
        <dbReference type="ChEBI" id="CHEBI:43474"/>
        <dbReference type="ChEBI" id="CHEBI:57259"/>
        <dbReference type="EC" id="2.4.2.2"/>
    </reaction>
</comment>
<comment type="catalytic activity">
    <reaction evidence="1">
        <text>uridine + phosphate = alpha-D-ribose 1-phosphate + uracil</text>
        <dbReference type="Rhea" id="RHEA:24388"/>
        <dbReference type="ChEBI" id="CHEBI:16704"/>
        <dbReference type="ChEBI" id="CHEBI:17568"/>
        <dbReference type="ChEBI" id="CHEBI:43474"/>
        <dbReference type="ChEBI" id="CHEBI:57720"/>
        <dbReference type="EC" id="2.4.2.2"/>
    </reaction>
</comment>
<comment type="catalytic activity">
    <reaction evidence="1">
        <text>xanthosine + phosphate = alpha-D-ribose 1-phosphate + xanthine</text>
        <dbReference type="Rhea" id="RHEA:27638"/>
        <dbReference type="ChEBI" id="CHEBI:17712"/>
        <dbReference type="ChEBI" id="CHEBI:18107"/>
        <dbReference type="ChEBI" id="CHEBI:43474"/>
        <dbReference type="ChEBI" id="CHEBI:57720"/>
        <dbReference type="EC" id="2.4.2.1"/>
    </reaction>
</comment>
<comment type="similarity">
    <text evidence="1">Belongs to the nucleoside phosphorylase PpnP family.</text>
</comment>
<sequence length="93" mass="10134">MLTVNSYFDESVKSIGFEQNKNAISVGVMLPGSYTFGTNAAEKMTVVTGSLTIKRSSDADWVTFSSGEFFSVEGSSSFDVNVEIETAYLCEYL</sequence>
<evidence type="ECO:0000255" key="1">
    <source>
        <dbReference type="HAMAP-Rule" id="MF_01537"/>
    </source>
</evidence>